<proteinExistence type="evidence at transcript level"/>
<protein>
    <recommendedName>
        <fullName evidence="7">Bifunctional cytochrome P450/NADPH--P450 reductase</fullName>
    </recommendedName>
    <alternativeName>
        <fullName evidence="6">AoCYP505A3</fullName>
    </alternativeName>
    <alternativeName>
        <fullName evidence="9">Cytochrome P450 monooxygenase</fullName>
    </alternativeName>
    <alternativeName>
        <fullName evidence="7">Fatty acid monooxygenase</fullName>
    </alternativeName>
    <alternativeName>
        <fullName evidence="7">Flavocytochrome P450</fullName>
    </alternativeName>
    <domain>
        <recommendedName>
            <fullName evidence="7">Cytochrome P450 505A3</fullName>
            <ecNumber evidence="1">1.14.14.1</ecNumber>
        </recommendedName>
    </domain>
    <domain>
        <recommendedName>
            <fullName evidence="7">NADPH--cytochrome P450 reductase</fullName>
            <ecNumber evidence="1">1.6.2.4</ecNumber>
        </recommendedName>
    </domain>
</protein>
<gene>
    <name evidence="9" type="primary">CYP505A3</name>
    <name evidence="8" type="ORF">AO090001000445</name>
</gene>
<evidence type="ECO:0000250" key="1">
    <source>
        <dbReference type="UniProtKB" id="P14779"/>
    </source>
</evidence>
<evidence type="ECO:0000255" key="2">
    <source>
        <dbReference type="PIRSR" id="PIRSR000209-1"/>
    </source>
</evidence>
<evidence type="ECO:0000255" key="3">
    <source>
        <dbReference type="PROSITE-ProRule" id="PRU00088"/>
    </source>
</evidence>
<evidence type="ECO:0000255" key="4">
    <source>
        <dbReference type="PROSITE-ProRule" id="PRU00716"/>
    </source>
</evidence>
<evidence type="ECO:0000269" key="5">
    <source ref="1"/>
</evidence>
<evidence type="ECO:0000303" key="6">
    <source ref="1"/>
</evidence>
<evidence type="ECO:0000305" key="7"/>
<evidence type="ECO:0000312" key="8">
    <source>
        <dbReference type="EMBL" id="BAE56963.1"/>
    </source>
</evidence>
<evidence type="ECO:0000312" key="9">
    <source>
        <dbReference type="EMBL" id="BAJ04395.1"/>
    </source>
</evidence>
<evidence type="ECO:0000312" key="10">
    <source>
        <dbReference type="Proteomes" id="UP000006564"/>
    </source>
</evidence>
<organism evidence="8">
    <name type="scientific">Aspergillus oryzae (strain ATCC 42149 / RIB 40)</name>
    <name type="common">Yellow koji mold</name>
    <dbReference type="NCBI Taxonomy" id="510516"/>
    <lineage>
        <taxon>Eukaryota</taxon>
        <taxon>Fungi</taxon>
        <taxon>Dikarya</taxon>
        <taxon>Ascomycota</taxon>
        <taxon>Pezizomycotina</taxon>
        <taxon>Eurotiomycetes</taxon>
        <taxon>Eurotiomycetidae</taxon>
        <taxon>Eurotiales</taxon>
        <taxon>Aspergillaceae</taxon>
        <taxon>Aspergillus</taxon>
        <taxon>Aspergillus subgen. Circumdati</taxon>
    </lineage>
</organism>
<comment type="function">
    <text evidence="1">Functions as a fatty acid monooxygenase. Also displays a NADPH-dependent reductase activity in the C-terminal domain, which allows electron transfer from NADPH to the heme iron of the cytochrome P450 N-terminal domain.</text>
</comment>
<comment type="catalytic activity">
    <reaction evidence="1">
        <text>2 oxidized [cytochrome P450] + NADPH = 2 reduced [cytochrome P450] + NADP(+) + H(+)</text>
        <dbReference type="Rhea" id="RHEA:24040"/>
        <dbReference type="Rhea" id="RHEA-COMP:14627"/>
        <dbReference type="Rhea" id="RHEA-COMP:14628"/>
        <dbReference type="ChEBI" id="CHEBI:15378"/>
        <dbReference type="ChEBI" id="CHEBI:55376"/>
        <dbReference type="ChEBI" id="CHEBI:57783"/>
        <dbReference type="ChEBI" id="CHEBI:58349"/>
        <dbReference type="ChEBI" id="CHEBI:60344"/>
        <dbReference type="EC" id="1.6.2.4"/>
    </reaction>
</comment>
<comment type="catalytic activity">
    <reaction evidence="1">
        <text>an organic molecule + reduced [NADPH--hemoprotein reductase] + O2 = an alcohol + oxidized [NADPH--hemoprotein reductase] + H2O + H(+)</text>
        <dbReference type="Rhea" id="RHEA:17149"/>
        <dbReference type="Rhea" id="RHEA-COMP:11964"/>
        <dbReference type="Rhea" id="RHEA-COMP:11965"/>
        <dbReference type="ChEBI" id="CHEBI:15377"/>
        <dbReference type="ChEBI" id="CHEBI:15378"/>
        <dbReference type="ChEBI" id="CHEBI:15379"/>
        <dbReference type="ChEBI" id="CHEBI:30879"/>
        <dbReference type="ChEBI" id="CHEBI:57618"/>
        <dbReference type="ChEBI" id="CHEBI:58210"/>
        <dbReference type="ChEBI" id="CHEBI:142491"/>
        <dbReference type="EC" id="1.14.14.1"/>
    </reaction>
</comment>
<comment type="cofactor">
    <cofactor evidence="1 2">
        <name>heme</name>
        <dbReference type="ChEBI" id="CHEBI:30413"/>
    </cofactor>
</comment>
<comment type="cofactor">
    <cofactor evidence="1">
        <name>FAD</name>
        <dbReference type="ChEBI" id="CHEBI:57692"/>
    </cofactor>
</comment>
<comment type="cofactor">
    <cofactor evidence="1">
        <name>FMN</name>
        <dbReference type="ChEBI" id="CHEBI:58210"/>
    </cofactor>
</comment>
<comment type="induction">
    <text evidence="5">Induced by nitrogen limitation.</text>
</comment>
<comment type="similarity">
    <text evidence="1">In the N-terminal section; belongs to the cytochrome P450 family.</text>
</comment>
<reference evidence="9" key="1">
    <citation type="journal article" date="2010" name="Arch. Microbiol.">
        <title>Molecular characterization and isolation of cytochrome P450 genes from the filamentous fungus Aspergillus oryzae.</title>
        <authorList>
            <person name="Nazmul Hussain Nazir K.H.M."/>
            <person name="Ichinose H."/>
            <person name="Wariishi H."/>
        </authorList>
    </citation>
    <scope>NUCLEOTIDE SEQUENCE [MRNA]</scope>
    <scope>INDUCTION</scope>
    <source>
        <strain evidence="6 9">ATCC 42149 / RIB 40</strain>
    </source>
</reference>
<reference evidence="8 10" key="2">
    <citation type="journal article" date="2005" name="Nature">
        <title>Genome sequencing and analysis of Aspergillus oryzae.</title>
        <authorList>
            <person name="Machida M."/>
            <person name="Asai K."/>
            <person name="Sano M."/>
            <person name="Tanaka T."/>
            <person name="Kumagai T."/>
            <person name="Terai G."/>
            <person name="Kusumoto K."/>
            <person name="Arima T."/>
            <person name="Akita O."/>
            <person name="Kashiwagi Y."/>
            <person name="Abe K."/>
            <person name="Gomi K."/>
            <person name="Horiuchi H."/>
            <person name="Kitamoto K."/>
            <person name="Kobayashi T."/>
            <person name="Takeuchi M."/>
            <person name="Denning D.W."/>
            <person name="Galagan J.E."/>
            <person name="Nierman W.C."/>
            <person name="Yu J."/>
            <person name="Archer D.B."/>
            <person name="Bennett J.W."/>
            <person name="Bhatnagar D."/>
            <person name="Cleveland T.E."/>
            <person name="Fedorova N.D."/>
            <person name="Gotoh O."/>
            <person name="Horikawa H."/>
            <person name="Hosoyama A."/>
            <person name="Ichinomiya M."/>
            <person name="Igarashi R."/>
            <person name="Iwashita K."/>
            <person name="Juvvadi P.R."/>
            <person name="Kato M."/>
            <person name="Kato Y."/>
            <person name="Kin T."/>
            <person name="Kokubun A."/>
            <person name="Maeda H."/>
            <person name="Maeyama N."/>
            <person name="Maruyama J."/>
            <person name="Nagasaki H."/>
            <person name="Nakajima T."/>
            <person name="Oda K."/>
            <person name="Okada K."/>
            <person name="Paulsen I."/>
            <person name="Sakamoto K."/>
            <person name="Sawano T."/>
            <person name="Takahashi M."/>
            <person name="Takase K."/>
            <person name="Terabayashi Y."/>
            <person name="Wortman J.R."/>
            <person name="Yamada O."/>
            <person name="Yamagata Y."/>
            <person name="Anazawa H."/>
            <person name="Hata Y."/>
            <person name="Koide Y."/>
            <person name="Komori T."/>
            <person name="Koyama Y."/>
            <person name="Minetoki T."/>
            <person name="Suharnan S."/>
            <person name="Tanaka A."/>
            <person name="Isono K."/>
            <person name="Kuhara S."/>
            <person name="Ogasawara N."/>
            <person name="Kikuchi H."/>
        </authorList>
    </citation>
    <scope>NUCLEOTIDE SEQUENCE [LARGE SCALE GENOMIC DNA]</scope>
    <source>
        <strain evidence="10">ATCC 42149 / RIB 40</strain>
    </source>
</reference>
<keyword id="KW-0249">Electron transport</keyword>
<keyword id="KW-0274">FAD</keyword>
<keyword id="KW-0285">Flavoprotein</keyword>
<keyword id="KW-0288">FMN</keyword>
<keyword id="KW-0349">Heme</keyword>
<keyword id="KW-0408">Iron</keyword>
<keyword id="KW-0479">Metal-binding</keyword>
<keyword id="KW-0503">Monooxygenase</keyword>
<keyword id="KW-0511">Multifunctional enzyme</keyword>
<keyword id="KW-0521">NADP</keyword>
<keyword id="KW-0560">Oxidoreductase</keyword>
<keyword id="KW-1185">Reference proteome</keyword>
<keyword id="KW-0813">Transport</keyword>
<name>C505_ASPOR</name>
<feature type="chain" id="PRO_0000436057" description="Bifunctional cytochrome P450/NADPH--P450 reductase">
    <location>
        <begin position="1"/>
        <end position="1103"/>
    </location>
</feature>
<feature type="domain" description="Flavodoxin-like" evidence="3">
    <location>
        <begin position="508"/>
        <end position="649"/>
    </location>
</feature>
<feature type="domain" description="FAD-binding FR-type" evidence="4">
    <location>
        <begin position="685"/>
        <end position="924"/>
    </location>
</feature>
<feature type="region of interest" description="Cytochrome P450" evidence="1">
    <location>
        <begin position="1"/>
        <end position="491"/>
    </location>
</feature>
<feature type="region of interest" description="NADPH--P450 reductase" evidence="1">
    <location>
        <begin position="492"/>
        <end position="1103"/>
    </location>
</feature>
<feature type="binding site" description="axial binding residue" evidence="1 2">
    <location>
        <position position="415"/>
    </location>
    <ligand>
        <name>heme</name>
        <dbReference type="ChEBI" id="CHEBI:30413"/>
    </ligand>
    <ligandPart>
        <name>Fe</name>
        <dbReference type="ChEBI" id="CHEBI:18248"/>
    </ligandPart>
</feature>
<feature type="binding site" evidence="1">
    <location>
        <begin position="514"/>
        <end position="519"/>
    </location>
    <ligand>
        <name>FMN</name>
        <dbReference type="ChEBI" id="CHEBI:58210"/>
    </ligand>
</feature>
<feature type="binding site" evidence="1">
    <location>
        <begin position="561"/>
        <end position="564"/>
    </location>
    <ligand>
        <name>FMN</name>
        <dbReference type="ChEBI" id="CHEBI:58210"/>
    </ligand>
</feature>
<feature type="binding site" evidence="1">
    <location>
        <position position="596"/>
    </location>
    <ligand>
        <name>FMN</name>
        <dbReference type="ChEBI" id="CHEBI:58210"/>
    </ligand>
</feature>
<feature type="binding site" evidence="1">
    <location>
        <position position="604"/>
    </location>
    <ligand>
        <name>FMN</name>
        <dbReference type="ChEBI" id="CHEBI:58210"/>
    </ligand>
</feature>
<feature type="site" description="Important for catalytic activity" evidence="1">
    <location>
        <position position="274"/>
    </location>
</feature>
<dbReference type="EC" id="1.14.14.1" evidence="1"/>
<dbReference type="EC" id="1.6.2.4" evidence="1"/>
<dbReference type="EMBL" id="AB514718">
    <property type="protein sequence ID" value="BAJ04395.1"/>
    <property type="molecule type" value="mRNA"/>
</dbReference>
<dbReference type="EMBL" id="BA000050">
    <property type="protein sequence ID" value="BAE56963.1"/>
    <property type="molecule type" value="Genomic_DNA"/>
</dbReference>
<dbReference type="RefSeq" id="XP_001818965.1">
    <property type="nucleotide sequence ID" value="XM_001818913.2"/>
</dbReference>
<dbReference type="SMR" id="Q2UNA2"/>
<dbReference type="STRING" id="510516.Q2UNA2"/>
<dbReference type="EnsemblFungi" id="BAE56963">
    <property type="protein sequence ID" value="BAE56963"/>
    <property type="gene ID" value="AO090001000445"/>
</dbReference>
<dbReference type="GeneID" id="5990936"/>
<dbReference type="KEGG" id="aor:AO090001000445"/>
<dbReference type="VEuPathDB" id="FungiDB:AO090001000445"/>
<dbReference type="HOGENOM" id="CLU_001570_7_0_1"/>
<dbReference type="OMA" id="TQLVMKW"/>
<dbReference type="OrthoDB" id="51954at5052"/>
<dbReference type="Proteomes" id="UP000006564">
    <property type="component" value="Chromosome 2"/>
</dbReference>
<dbReference type="GO" id="GO:0005829">
    <property type="term" value="C:cytosol"/>
    <property type="evidence" value="ECO:0007669"/>
    <property type="project" value="TreeGrafter"/>
</dbReference>
<dbReference type="GO" id="GO:0070330">
    <property type="term" value="F:aromatase activity"/>
    <property type="evidence" value="ECO:0007669"/>
    <property type="project" value="InterPro"/>
</dbReference>
<dbReference type="GO" id="GO:0050660">
    <property type="term" value="F:flavin adenine dinucleotide binding"/>
    <property type="evidence" value="ECO:0007669"/>
    <property type="project" value="TreeGrafter"/>
</dbReference>
<dbReference type="GO" id="GO:0010181">
    <property type="term" value="F:FMN binding"/>
    <property type="evidence" value="ECO:0007669"/>
    <property type="project" value="InterPro"/>
</dbReference>
<dbReference type="GO" id="GO:0020037">
    <property type="term" value="F:heme binding"/>
    <property type="evidence" value="ECO:0007669"/>
    <property type="project" value="InterPro"/>
</dbReference>
<dbReference type="GO" id="GO:0005506">
    <property type="term" value="F:iron ion binding"/>
    <property type="evidence" value="ECO:0007669"/>
    <property type="project" value="InterPro"/>
</dbReference>
<dbReference type="GO" id="GO:0003958">
    <property type="term" value="F:NADPH-hemoprotein reductase activity"/>
    <property type="evidence" value="ECO:0007669"/>
    <property type="project" value="UniProtKB-EC"/>
</dbReference>
<dbReference type="CDD" id="cd06206">
    <property type="entry name" value="bifunctional_CYPOR"/>
    <property type="match status" value="1"/>
</dbReference>
<dbReference type="CDD" id="cd11068">
    <property type="entry name" value="CYP120A1"/>
    <property type="match status" value="1"/>
</dbReference>
<dbReference type="FunFam" id="1.10.630.10:FF:000040">
    <property type="entry name" value="Bifunctional cytochrome P450/NADPH--P450 reductase"/>
    <property type="match status" value="1"/>
</dbReference>
<dbReference type="Gene3D" id="3.40.50.360">
    <property type="match status" value="1"/>
</dbReference>
<dbReference type="Gene3D" id="1.10.630.10">
    <property type="entry name" value="Cytochrome P450"/>
    <property type="match status" value="1"/>
</dbReference>
<dbReference type="Gene3D" id="1.20.990.10">
    <property type="entry name" value="NADPH-cytochrome p450 Reductase, Chain A, domain 3"/>
    <property type="match status" value="1"/>
</dbReference>
<dbReference type="Gene3D" id="3.40.50.80">
    <property type="entry name" value="Nucleotide-binding domain of ferredoxin-NADP reductase (FNR) module"/>
    <property type="match status" value="1"/>
</dbReference>
<dbReference type="Gene3D" id="2.40.30.10">
    <property type="entry name" value="Translation factors"/>
    <property type="match status" value="1"/>
</dbReference>
<dbReference type="InterPro" id="IPR023206">
    <property type="entry name" value="Bifunctional_P450_P450_red"/>
</dbReference>
<dbReference type="InterPro" id="IPR003097">
    <property type="entry name" value="CysJ-like_FAD-binding"/>
</dbReference>
<dbReference type="InterPro" id="IPR001128">
    <property type="entry name" value="Cyt_P450"/>
</dbReference>
<dbReference type="InterPro" id="IPR017972">
    <property type="entry name" value="Cyt_P450_CS"/>
</dbReference>
<dbReference type="InterPro" id="IPR002401">
    <property type="entry name" value="Cyt_P450_E_grp-I"/>
</dbReference>
<dbReference type="InterPro" id="IPR036396">
    <property type="entry name" value="Cyt_P450_sf"/>
</dbReference>
<dbReference type="InterPro" id="IPR017927">
    <property type="entry name" value="FAD-bd_FR_type"/>
</dbReference>
<dbReference type="InterPro" id="IPR008254">
    <property type="entry name" value="Flavodoxin/NO_synth"/>
</dbReference>
<dbReference type="InterPro" id="IPR029039">
    <property type="entry name" value="Flavoprotein-like_sf"/>
</dbReference>
<dbReference type="InterPro" id="IPR039261">
    <property type="entry name" value="FNR_nucleotide-bd"/>
</dbReference>
<dbReference type="InterPro" id="IPR023173">
    <property type="entry name" value="NADPH_Cyt_P450_Rdtase_alpha"/>
</dbReference>
<dbReference type="InterPro" id="IPR001433">
    <property type="entry name" value="OxRdtase_FAD/NAD-bd"/>
</dbReference>
<dbReference type="InterPro" id="IPR017938">
    <property type="entry name" value="Riboflavin_synthase-like_b-brl"/>
</dbReference>
<dbReference type="PANTHER" id="PTHR19384:SF127">
    <property type="entry name" value="BIFUNCTIONAL CYTOCHROME P450_NADPH--P450 REDUCTASE"/>
    <property type="match status" value="1"/>
</dbReference>
<dbReference type="PANTHER" id="PTHR19384">
    <property type="entry name" value="NITRIC OXIDE SYNTHASE-RELATED"/>
    <property type="match status" value="1"/>
</dbReference>
<dbReference type="Pfam" id="PF00667">
    <property type="entry name" value="FAD_binding_1"/>
    <property type="match status" value="1"/>
</dbReference>
<dbReference type="Pfam" id="PF00258">
    <property type="entry name" value="Flavodoxin_1"/>
    <property type="match status" value="1"/>
</dbReference>
<dbReference type="Pfam" id="PF00175">
    <property type="entry name" value="NAD_binding_1"/>
    <property type="match status" value="1"/>
</dbReference>
<dbReference type="Pfam" id="PF00067">
    <property type="entry name" value="p450"/>
    <property type="match status" value="1"/>
</dbReference>
<dbReference type="PIRSF" id="PIRSF000209">
    <property type="entry name" value="Bifunctional_P450_P450R"/>
    <property type="match status" value="1"/>
</dbReference>
<dbReference type="PRINTS" id="PR00463">
    <property type="entry name" value="EP450I"/>
</dbReference>
<dbReference type="PRINTS" id="PR00385">
    <property type="entry name" value="P450"/>
</dbReference>
<dbReference type="SUPFAM" id="SSF48264">
    <property type="entry name" value="Cytochrome P450"/>
    <property type="match status" value="1"/>
</dbReference>
<dbReference type="SUPFAM" id="SSF52343">
    <property type="entry name" value="Ferredoxin reductase-like, C-terminal NADP-linked domain"/>
    <property type="match status" value="1"/>
</dbReference>
<dbReference type="SUPFAM" id="SSF52218">
    <property type="entry name" value="Flavoproteins"/>
    <property type="match status" value="1"/>
</dbReference>
<dbReference type="SUPFAM" id="SSF63380">
    <property type="entry name" value="Riboflavin synthase domain-like"/>
    <property type="match status" value="1"/>
</dbReference>
<dbReference type="PROSITE" id="PS00086">
    <property type="entry name" value="CYTOCHROME_P450"/>
    <property type="match status" value="1"/>
</dbReference>
<dbReference type="PROSITE" id="PS51384">
    <property type="entry name" value="FAD_FR"/>
    <property type="match status" value="1"/>
</dbReference>
<dbReference type="PROSITE" id="PS50902">
    <property type="entry name" value="FLAVODOXIN_LIKE"/>
    <property type="match status" value="1"/>
</dbReference>
<accession>Q2UNA2</accession>
<accession>D4QC47</accession>
<sequence>MSTPKAEPVPIPGPRGVPLMGNILDIESEIPLRSLEMMADTYGPIYRLTTFGFSRCMISSHELAAEVFDEERFTKKIMAGLSELRHGIHDGLFTAHMGEENWEIAHRVLMPAFGPLNIQNMFDEMHDIATQLVMKWARQGPKQKIMVTDDFTRLTLDTIALCAMGTRFNSFYSEEMHPFVDAMVGMLKTAGDRSRRPGLVNNLPTTENNKYWEDIDYLRNLCKELVDTRKKNPTDKKDLLNALINGRDPKTGKGMSYDSIIDNMITFLIAGHETTSGSLSFAFYNMLKNPQAYQKAQEEVDRVIGRRRITVEDLQKLPYITAVMRETLRLTPTAPAIAVGPHPTKNHEDPVTLGNGKYVLGKDEPCALLLGKIQRDPKVYGPDAEEFKPERMLDEHFNKLPKHAWKPFGNGMRACIGRPFAWQEALLVIAMLLQNFNFQMDDPSYNIQLKQTLTIKPNHFYMRAALREGLDAVHLGSALSASSSEHADHAAGHGKAGAAKKGADLKPMHVYYGSNTGTCEAFARRLADDATSYGYSAEVESLDSAKDSIPKNGPVVFITASYEGQPPDNAAHFFEWLSALKGDKPLDGVNYAVFGCGHHDWQTTFYRIPKEVNRLVGENGANRLCEIGLADTANADIVTDFDTWGETSFWPAVAAKFGSNTQGSQKSSTFRVEVSSGHRATTLGLQLQEGLVVENTLLTQAGVPAKRTIRFKLPTDTQYKCGDYLAILPVNPSTVVRKVMSRFDLPWDAVLRIEKASPSSSKHISIPMDTQVSAYDLFATYVELSQPASKRDLAVLADAAAVDPETQAELQAIASDPARFAEISQKRISVLDLLLQYPSINLAIGDFVAMLPPMRVRQYSISSSPLVDPTECSITFSVLKAPSLAALTKEDEYLGVASTYLSELRSGERVQLSVRPSHTGFKPPTELSTPMIMACAGSGLAPFRGFVMDRAEKIRGRRSSGSMPEQPAKAILYAGCRTQGKDDIHADELAEWEKIGAVEVRRAYSRPSDGSKGTHVQDLMMEDKKELIDLFESGARIYVCGTPGVGNAVRDSIKSMFLERREEIRRIAKEKGEPVSDDDEETAFEKFLDDMKTKERYTTDIFA</sequence>